<dbReference type="EC" id="3.4.23.-" evidence="7"/>
<dbReference type="EMBL" id="JT121371">
    <property type="status" value="NOT_ANNOTATED_CDS"/>
    <property type="molecule type" value="mRNA"/>
</dbReference>
<dbReference type="EMBL" id="HE967761">
    <property type="protein sequence ID" value="CCQ18550.1"/>
    <property type="molecule type" value="mRNA"/>
</dbReference>
<dbReference type="RefSeq" id="NP_001278230.1">
    <property type="nucleotide sequence ID" value="NM_001291301.1"/>
</dbReference>
<dbReference type="SMR" id="W8W138"/>
<dbReference type="STRING" id="7668.W8W138"/>
<dbReference type="EnsemblMetazoa" id="NM_001291301">
    <property type="protein sequence ID" value="NP_001278230"/>
    <property type="gene ID" value="GeneID_585631"/>
</dbReference>
<dbReference type="GeneID" id="585631"/>
<dbReference type="KEGG" id="spu:585631"/>
<dbReference type="CTD" id="23621"/>
<dbReference type="eggNOG" id="KOG1339">
    <property type="taxonomic scope" value="Eukaryota"/>
</dbReference>
<dbReference type="InParanoid" id="W8W138"/>
<dbReference type="OMA" id="CYKFAIF"/>
<dbReference type="OrthoDB" id="2747330at2759"/>
<dbReference type="Proteomes" id="UP000007110">
    <property type="component" value="Unassembled WGS sequence"/>
</dbReference>
<dbReference type="GO" id="GO:0005768">
    <property type="term" value="C:endosome"/>
    <property type="evidence" value="ECO:0000318"/>
    <property type="project" value="GO_Central"/>
</dbReference>
<dbReference type="GO" id="GO:0005886">
    <property type="term" value="C:plasma membrane"/>
    <property type="evidence" value="ECO:0000318"/>
    <property type="project" value="GO_Central"/>
</dbReference>
<dbReference type="GO" id="GO:0005802">
    <property type="term" value="C:trans-Golgi network"/>
    <property type="evidence" value="ECO:0000318"/>
    <property type="project" value="GO_Central"/>
</dbReference>
<dbReference type="GO" id="GO:0004190">
    <property type="term" value="F:aspartic-type endopeptidase activity"/>
    <property type="evidence" value="ECO:0007669"/>
    <property type="project" value="UniProtKB-KW"/>
</dbReference>
<dbReference type="GO" id="GO:0050435">
    <property type="term" value="P:amyloid-beta metabolic process"/>
    <property type="evidence" value="ECO:0000318"/>
    <property type="project" value="GO_Central"/>
</dbReference>
<dbReference type="GO" id="GO:0006509">
    <property type="term" value="P:membrane protein ectodomain proteolysis"/>
    <property type="evidence" value="ECO:0000318"/>
    <property type="project" value="GO_Central"/>
</dbReference>
<dbReference type="CDD" id="cd05473">
    <property type="entry name" value="beta_secretase_like"/>
    <property type="match status" value="1"/>
</dbReference>
<dbReference type="FunFam" id="2.40.70.10:FF:000003">
    <property type="entry name" value="Beta-secretase 1"/>
    <property type="match status" value="1"/>
</dbReference>
<dbReference type="FunFam" id="2.40.70.10:FF:000007">
    <property type="entry name" value="Beta-secretase 1"/>
    <property type="match status" value="1"/>
</dbReference>
<dbReference type="Gene3D" id="2.40.70.10">
    <property type="entry name" value="Acid Proteases"/>
    <property type="match status" value="2"/>
</dbReference>
<dbReference type="InterPro" id="IPR001461">
    <property type="entry name" value="Aspartic_peptidase_A1"/>
</dbReference>
<dbReference type="InterPro" id="IPR001969">
    <property type="entry name" value="Aspartic_peptidase_AS"/>
</dbReference>
<dbReference type="InterPro" id="IPR009119">
    <property type="entry name" value="BACE"/>
</dbReference>
<dbReference type="InterPro" id="IPR009120">
    <property type="entry name" value="BACE1"/>
</dbReference>
<dbReference type="InterPro" id="IPR033874">
    <property type="entry name" value="Memapsin-like"/>
</dbReference>
<dbReference type="InterPro" id="IPR033121">
    <property type="entry name" value="PEPTIDASE_A1"/>
</dbReference>
<dbReference type="InterPro" id="IPR021109">
    <property type="entry name" value="Peptidase_aspartic_dom_sf"/>
</dbReference>
<dbReference type="PANTHER" id="PTHR47965:SF12">
    <property type="entry name" value="ASPARTIC PROTEINASE 3-RELATED"/>
    <property type="match status" value="1"/>
</dbReference>
<dbReference type="PANTHER" id="PTHR47965">
    <property type="entry name" value="ASPARTYL PROTEASE-RELATED"/>
    <property type="match status" value="1"/>
</dbReference>
<dbReference type="Pfam" id="PF00026">
    <property type="entry name" value="Asp"/>
    <property type="match status" value="1"/>
</dbReference>
<dbReference type="PRINTS" id="PR01816">
    <property type="entry name" value="BACE1"/>
</dbReference>
<dbReference type="PRINTS" id="PR01815">
    <property type="entry name" value="BACEFAMILY"/>
</dbReference>
<dbReference type="PRINTS" id="PR00792">
    <property type="entry name" value="PEPSIN"/>
</dbReference>
<dbReference type="SUPFAM" id="SSF50630">
    <property type="entry name" value="Acid proteases"/>
    <property type="match status" value="1"/>
</dbReference>
<dbReference type="PROSITE" id="PS00141">
    <property type="entry name" value="ASP_PROTEASE"/>
    <property type="match status" value="1"/>
</dbReference>
<dbReference type="PROSITE" id="PS51767">
    <property type="entry name" value="PEPTIDASE_A1"/>
    <property type="match status" value="1"/>
</dbReference>
<keyword id="KW-0064">Aspartyl protease</keyword>
<keyword id="KW-1015">Disulfide bond</keyword>
<keyword id="KW-0378">Hydrolase</keyword>
<keyword id="KW-0472">Membrane</keyword>
<keyword id="KW-0645">Protease</keyword>
<keyword id="KW-1185">Reference proteome</keyword>
<keyword id="KW-0732">Signal</keyword>
<keyword id="KW-0812">Transmembrane</keyword>
<keyword id="KW-1133">Transmembrane helix</keyword>
<keyword id="KW-0865">Zymogen</keyword>
<gene>
    <name evidence="8" type="primary">BACE</name>
</gene>
<reference evidence="7" key="1">
    <citation type="journal article" date="2012" name="Genome Res.">
        <title>Gene structure in the sea urchin Strongylocentrotus purpuratus based on transcriptome analysis.</title>
        <authorList>
            <person name="Tu Q."/>
            <person name="Cameron R.A."/>
            <person name="Worley K.C."/>
            <person name="Gibbs R.A."/>
            <person name="Davidson E.H."/>
        </authorList>
    </citation>
    <scope>NUCLEOTIDE SEQUENCE [LARGE SCALE MRNA]</scope>
</reference>
<reference key="2">
    <citation type="submission" date="2011-04" db="EMBL/GenBank/DDBJ databases">
        <authorList>
            <person name="Deng J."/>
            <person name="Liu Y."/>
            <person name="Angeri F."/>
            <person name="Arias F."/>
            <person name="Bandaranaike D."/>
            <person name="Bess C."/>
            <person name="Blankenburg K."/>
            <person name="Chen D."/>
            <person name="Deiros R.D.R."/>
            <person name="Denson S."/>
            <person name="Dinh H."/>
            <person name="Francisco L."/>
            <person name="Fu Q."/>
            <person name="Gubbala S."/>
            <person name="Han Y."/>
            <person name="Hiang H."/>
            <person name="Javaid M."/>
            <person name="Jayaseelan J.C."/>
            <person name="Jing C."/>
            <person name="Jones J."/>
            <person name="Korchina V."/>
            <person name="Lara F."/>
            <person name="Lee S."/>
            <person name="Li H."/>
            <person name="Mims S."/>
            <person name="Munidasa M."/>
            <person name="Ngo R."/>
            <person name="Nguyen L."/>
            <person name="Ongeri F."/>
            <person name="Osuji N."/>
            <person name="Palculict T."/>
            <person name="Patil S."/>
            <person name="Paul S."/>
            <person name="Pellon M."/>
            <person name="Perales L."/>
            <person name="Pu L."/>
            <person name="Puazo M."/>
            <person name="Qin X."/>
            <person name="Qu C."/>
            <person name="Raj R."/>
            <person name="Saada N."/>
            <person name="Shafer J."/>
            <person name="Shah N."/>
            <person name="Song H."/>
            <person name="Tang L."/>
            <person name="Vee V."/>
            <person name="Wang Y."/>
            <person name="Weissenberger G."/>
            <person name="Xin Y."/>
            <person name="Nazareth L."/>
            <person name="Newsham I."/>
            <person name="Wang M."/>
            <person name="Wu Y."/>
            <person name="Worley K.C."/>
            <person name="Reid J.G."/>
            <person name="Han Y."/>
            <person name="Muzny D.M."/>
            <person name="Gibbs R."/>
        </authorList>
    </citation>
    <scope>NUCLEOTIDE SEQUENCE [LARGE SCALE GENOMIC DNA]</scope>
</reference>
<reference evidence="8" key="3">
    <citation type="journal article" date="2013" name="Front. Genet.">
        <title>A tale of two drug targets: the evolutionary history of BACE1 and BACE2.</title>
        <authorList>
            <person name="Southan C."/>
            <person name="Hancock J.M."/>
        </authorList>
    </citation>
    <scope>IDENTIFICATION</scope>
</reference>
<evidence type="ECO:0000250" key="1">
    <source>
        <dbReference type="UniProtKB" id="P56817"/>
    </source>
</evidence>
<evidence type="ECO:0000255" key="2"/>
<evidence type="ECO:0000255" key="3">
    <source>
        <dbReference type="PROSITE-ProRule" id="PRU01103"/>
    </source>
</evidence>
<evidence type="ECO:0000255" key="4">
    <source>
        <dbReference type="PROSITE-ProRule" id="PRU10094"/>
    </source>
</evidence>
<evidence type="ECO:0000255" key="5">
    <source>
        <dbReference type="RuleBase" id="RU000454"/>
    </source>
</evidence>
<evidence type="ECO:0000303" key="6">
    <source>
    </source>
</evidence>
<evidence type="ECO:0000305" key="7"/>
<evidence type="ECO:0000312" key="8">
    <source>
        <dbReference type="EMBL" id="CCQ18550.1"/>
    </source>
</evidence>
<proteinExistence type="evidence at transcript level"/>
<name>BACE_STRPU</name>
<organism>
    <name type="scientific">Strongylocentrotus purpuratus</name>
    <name type="common">Purple sea urchin</name>
    <dbReference type="NCBI Taxonomy" id="7668"/>
    <lineage>
        <taxon>Eukaryota</taxon>
        <taxon>Metazoa</taxon>
        <taxon>Echinodermata</taxon>
        <taxon>Eleutherozoa</taxon>
        <taxon>Echinozoa</taxon>
        <taxon>Echinoidea</taxon>
        <taxon>Euechinoidea</taxon>
        <taxon>Echinacea</taxon>
        <taxon>Camarodonta</taxon>
        <taxon>Echinidea</taxon>
        <taxon>Strongylocentrotidae</taxon>
        <taxon>Strongylocentrotus</taxon>
    </lineage>
</organism>
<feature type="signal peptide" evidence="2">
    <location>
        <begin position="1"/>
        <end position="31"/>
    </location>
</feature>
<feature type="propeptide" id="PRO_0000432827" evidence="7">
    <location>
        <begin position="32"/>
        <end status="unknown"/>
    </location>
</feature>
<feature type="chain" id="PRO_0000432828" description="Beta-secretase" evidence="7">
    <location>
        <begin status="unknown"/>
        <end position="540"/>
    </location>
</feature>
<feature type="topological domain" description="Extracellular" evidence="2">
    <location>
        <begin status="unknown"/>
        <end position="482"/>
    </location>
</feature>
<feature type="transmembrane region" description="Helical" evidence="2">
    <location>
        <begin position="483"/>
        <end position="503"/>
    </location>
</feature>
<feature type="topological domain" description="Cytoplasmic" evidence="2">
    <location>
        <begin position="504"/>
        <end position="540"/>
    </location>
</feature>
<feature type="domain" description="Peptidase A1" evidence="3">
    <location>
        <begin position="81"/>
        <end position="435"/>
    </location>
</feature>
<feature type="active site" evidence="4">
    <location>
        <position position="99"/>
    </location>
</feature>
<feature type="active site" evidence="7">
    <location>
        <position position="302"/>
    </location>
</feature>
<feature type="disulfide bond" evidence="1">
    <location>
        <begin position="222"/>
        <end position="439"/>
    </location>
</feature>
<feature type="disulfide bond" evidence="1">
    <location>
        <begin position="291"/>
        <end position="469"/>
    </location>
</feature>
<feature type="disulfide bond" evidence="1">
    <location>
        <begin position="345"/>
        <end position="397"/>
    </location>
</feature>
<accession>W8W138</accession>
<accession>W4ZI74</accession>
<sequence length="540" mass="59336">MHFSLPTSRIVVVVPAAAICIVCVLIETCTAARSHVYTIPLRKGKETSFAETVGEPVRTNQVNVSVEEQKNNIRGRPGLGYYIEVDIGTPPQKLNVLIDTGSSNFAVAASSHNAISTYYRRNESSTYEDQGTYVKVPYTQGEWSGDLGQDLVQIASLGNQSFQANIAAITESKMFFLNDSRWQGILGLGYAEIARPDSSVEPFFDSLTSQTSIQDIFALQMCGALASTNDTNLGSSADGPVEEVIGSMNIGGLDASLYHGTMQYAPLRDEWFYEVIMTDIRVGNDSLGLDCKEYNFDKTIVDSGTTNLRLPVRVFEAITNAIKAHTTKHMPDVPSEFWTGMNLMCPTDSTSPYEPYHWFPTLTLDLQSTNQGQAFSLVVSPQQYLRRDYDHEDKKNCFKFAIAPSTNHAGAVIGAVIMEGFYVVFDRENKRVGFARSTCPGACEKTGTCVGNSPLITEAFNIDFDASDCGYDRSTSYDPALTITAYVLAAICLVCLIPVIVFALTHQINKRCKGRRGRGVVNHHRLDQEGLAENEPNSDP</sequence>
<protein>
    <recommendedName>
        <fullName evidence="6">Beta-secretase</fullName>
        <ecNumber evidence="7">3.4.23.-</ecNumber>
    </recommendedName>
</protein>
<comment type="subcellular location">
    <subcellularLocation>
        <location evidence="2">Membrane</location>
        <topology evidence="2">Single-pass type I membrane protein</topology>
    </subcellularLocation>
</comment>
<comment type="similarity">
    <text evidence="5">Belongs to the peptidase A1 family.</text>
</comment>